<accession>P25253</accession>
<sequence>MKKIACLSALAAVLAVSAGTAVAATSTVTGGYAQSDMQGVMNKTNGFNLKYRYEQDNNPLGVIGSFTYTEKDRTENGSYNKGQYYGITAGPAYRLNDWASIYGVVGVGYGKFQQTENQGLNRTASNSDYGFSYGAGMQFNPIENVALDFSYEQSRIRNVDVGTWIAGVGYRF</sequence>
<gene>
    <name type="primary">ompX</name>
</gene>
<protein>
    <recommendedName>
        <fullName>Outer membrane protein X</fullName>
    </recommendedName>
</protein>
<organism>
    <name type="scientific">Enterobacter cloacae</name>
    <dbReference type="NCBI Taxonomy" id="550"/>
    <lineage>
        <taxon>Bacteria</taxon>
        <taxon>Pseudomonadati</taxon>
        <taxon>Pseudomonadota</taxon>
        <taxon>Gammaproteobacteria</taxon>
        <taxon>Enterobacterales</taxon>
        <taxon>Enterobacteriaceae</taxon>
        <taxon>Enterobacter</taxon>
        <taxon>Enterobacter cloacae complex</taxon>
    </lineage>
</organism>
<evidence type="ECO:0000250" key="1"/>
<evidence type="ECO:0000269" key="2">
    <source>
    </source>
</evidence>
<evidence type="ECO:0000305" key="3"/>
<proteinExistence type="evidence at protein level"/>
<reference key="1">
    <citation type="journal article" date="1991" name="J. Bacteriol.">
        <title>Molecular characterization of an Enterobacter cloacae outer membrane protein (OmpX).</title>
        <authorList>
            <person name="Stoorvogel J."/>
            <person name="van Bussel M.J.A.W.M."/>
            <person name="Tommassen J."/>
            <person name="van de Klundert J.A.M."/>
        </authorList>
    </citation>
    <scope>NUCLEOTIDE SEQUENCE [GENOMIC DNA]</scope>
    <scope>PROTEIN SEQUENCE OF 24-38</scope>
</reference>
<reference key="2">
    <citation type="journal article" date="1991" name="J. Bacteriol.">
        <title>Biological characterization of an Enterobacter cloacae outer membrane protein (OmpX).</title>
        <authorList>
            <person name="Stoorvogel J."/>
            <person name="van Bussel M.J.A.W.M."/>
            <person name="van de Klundert J.A.M."/>
        </authorList>
    </citation>
    <scope>CHARACTERIZATION</scope>
</reference>
<dbReference type="EMBL" id="M33878">
    <property type="protein sequence ID" value="AAA24808.1"/>
    <property type="molecule type" value="Genomic_DNA"/>
</dbReference>
<dbReference type="PIR" id="A39189">
    <property type="entry name" value="A39189"/>
</dbReference>
<dbReference type="RefSeq" id="WP_003858450.1">
    <property type="nucleotide sequence ID" value="NZ_PEHU01000016.1"/>
</dbReference>
<dbReference type="BMRB" id="P25253"/>
<dbReference type="SMR" id="P25253"/>
<dbReference type="GeneID" id="92383623"/>
<dbReference type="eggNOG" id="COG3637">
    <property type="taxonomic scope" value="Bacteria"/>
</dbReference>
<dbReference type="GO" id="GO:0009279">
    <property type="term" value="C:cell outer membrane"/>
    <property type="evidence" value="ECO:0007669"/>
    <property type="project" value="UniProtKB-SubCell"/>
</dbReference>
<dbReference type="GO" id="GO:0044384">
    <property type="term" value="C:host outer membrane"/>
    <property type="evidence" value="ECO:0007669"/>
    <property type="project" value="InterPro"/>
</dbReference>
<dbReference type="Gene3D" id="2.40.160.20">
    <property type="match status" value="1"/>
</dbReference>
<dbReference type="InterPro" id="IPR051723">
    <property type="entry name" value="Bact_OM_Invasion-Related"/>
</dbReference>
<dbReference type="InterPro" id="IPR000758">
    <property type="entry name" value="Enterovir_OMP"/>
</dbReference>
<dbReference type="InterPro" id="IPR011250">
    <property type="entry name" value="OMP/PagP_b-brl"/>
</dbReference>
<dbReference type="InterPro" id="IPR027385">
    <property type="entry name" value="OMP_b-brl"/>
</dbReference>
<dbReference type="NCBIfam" id="NF006917">
    <property type="entry name" value="PRK09408.1"/>
    <property type="match status" value="1"/>
</dbReference>
<dbReference type="PANTHER" id="PTHR35892">
    <property type="entry name" value="OUTER MEMBRANE PROTEIN PAGN-RELATED"/>
    <property type="match status" value="1"/>
</dbReference>
<dbReference type="PANTHER" id="PTHR35892:SF3">
    <property type="entry name" value="OUTER MEMBRANE PROTEIN X"/>
    <property type="match status" value="1"/>
</dbReference>
<dbReference type="Pfam" id="PF13505">
    <property type="entry name" value="OMP_b-brl"/>
    <property type="match status" value="1"/>
</dbReference>
<dbReference type="PRINTS" id="PR00316">
    <property type="entry name" value="ENTEROVIROMP"/>
</dbReference>
<dbReference type="SUPFAM" id="SSF56925">
    <property type="entry name" value="OMPA-like"/>
    <property type="match status" value="1"/>
</dbReference>
<dbReference type="PROSITE" id="PS00694">
    <property type="entry name" value="ENT_VIR_OMP_1"/>
    <property type="match status" value="1"/>
</dbReference>
<dbReference type="PROSITE" id="PS00695">
    <property type="entry name" value="ENT_VIR_OMP_2"/>
    <property type="match status" value="1"/>
</dbReference>
<name>OMPX_ENTCL</name>
<comment type="subcellular location">
    <subcellularLocation>
        <location>Cell outer membrane</location>
        <topology>Multi-pass membrane protein</topology>
    </subcellularLocation>
</comment>
<comment type="similarity">
    <text evidence="3">Belongs to the outer membrane OOP (TC 1.B.6) superfamily. OmpX family.</text>
</comment>
<feature type="signal peptide" evidence="2">
    <location>
        <begin position="1"/>
        <end position="23"/>
    </location>
</feature>
<feature type="chain" id="PRO_0000020203" description="Outer membrane protein X">
    <location>
        <begin position="24"/>
        <end position="172"/>
    </location>
</feature>
<feature type="topological domain" description="Periplasmic" evidence="1">
    <location>
        <begin position="24"/>
        <end position="25"/>
    </location>
</feature>
<feature type="transmembrane region" description="Beta stranded" evidence="1">
    <location>
        <begin position="26"/>
        <end position="35"/>
    </location>
</feature>
<feature type="topological domain" description="Extracellular" evidence="1">
    <location>
        <begin position="36"/>
        <end position="44"/>
    </location>
</feature>
<feature type="transmembrane region" description="Beta stranded" evidence="1">
    <location>
        <begin position="45"/>
        <end position="55"/>
    </location>
</feature>
<feature type="topological domain" description="Periplasmic" evidence="1">
    <location>
        <begin position="56"/>
        <end position="59"/>
    </location>
</feature>
<feature type="transmembrane region" description="Beta stranded" evidence="1">
    <location>
        <begin position="60"/>
        <end position="69"/>
    </location>
</feature>
<feature type="topological domain" description="Extracellular" evidence="1">
    <location>
        <begin position="70"/>
        <end position="83"/>
    </location>
</feature>
<feature type="transmembrane region" description="Beta stranded" evidence="1">
    <location>
        <begin position="84"/>
        <end position="94"/>
    </location>
</feature>
<feature type="topological domain" description="Periplasmic" evidence="1">
    <location>
        <begin position="95"/>
        <end position="98"/>
    </location>
</feature>
<feature type="transmembrane region" description="Beta stranded" evidence="1">
    <location>
        <begin position="99"/>
        <end position="108"/>
    </location>
</feature>
<feature type="topological domain" description="Extracellular" evidence="1">
    <location>
        <begin position="109"/>
        <end position="130"/>
    </location>
</feature>
<feature type="transmembrane region" description="Beta stranded" evidence="1">
    <location>
        <begin position="131"/>
        <end position="140"/>
    </location>
</feature>
<feature type="topological domain" description="Periplasmic" evidence="1">
    <location>
        <begin position="141"/>
        <end position="144"/>
    </location>
</feature>
<feature type="transmembrane region" description="Beta stranded" evidence="1">
    <location>
        <begin position="145"/>
        <end position="154"/>
    </location>
</feature>
<feature type="topological domain" description="Extracellular" evidence="1">
    <location>
        <begin position="155"/>
        <end position="161"/>
    </location>
</feature>
<feature type="transmembrane region" description="Beta stranded" evidence="1">
    <location>
        <begin position="162"/>
        <end position="171"/>
    </location>
</feature>
<feature type="topological domain" description="Periplasmic" evidence="1">
    <location>
        <position position="172"/>
    </location>
</feature>
<keyword id="KW-0998">Cell outer membrane</keyword>
<keyword id="KW-0903">Direct protein sequencing</keyword>
<keyword id="KW-0472">Membrane</keyword>
<keyword id="KW-0732">Signal</keyword>
<keyword id="KW-0812">Transmembrane</keyword>
<keyword id="KW-1134">Transmembrane beta strand</keyword>